<keyword id="KW-0963">Cytoplasm</keyword>
<keyword id="KW-0324">Glycolysis</keyword>
<keyword id="KW-0456">Lyase</keyword>
<keyword id="KW-0460">Magnesium</keyword>
<keyword id="KW-0479">Metal-binding</keyword>
<keyword id="KW-1185">Reference proteome</keyword>
<keyword id="KW-0964">Secreted</keyword>
<evidence type="ECO:0000255" key="1">
    <source>
        <dbReference type="HAMAP-Rule" id="MF_00318"/>
    </source>
</evidence>
<reference key="1">
    <citation type="journal article" date="2007" name="PLoS Genet.">
        <title>Patterns and implications of gene gain and loss in the evolution of Prochlorococcus.</title>
        <authorList>
            <person name="Kettler G.C."/>
            <person name="Martiny A.C."/>
            <person name="Huang K."/>
            <person name="Zucker J."/>
            <person name="Coleman M.L."/>
            <person name="Rodrigue S."/>
            <person name="Chen F."/>
            <person name="Lapidus A."/>
            <person name="Ferriera S."/>
            <person name="Johnson J."/>
            <person name="Steglich C."/>
            <person name="Church G.M."/>
            <person name="Richardson P."/>
            <person name="Chisholm S.W."/>
        </authorList>
    </citation>
    <scope>NUCLEOTIDE SEQUENCE [LARGE SCALE GENOMIC DNA]</scope>
    <source>
        <strain>NATL2A</strain>
    </source>
</reference>
<dbReference type="EC" id="4.2.1.11" evidence="1"/>
<dbReference type="EMBL" id="CP000095">
    <property type="protein sequence ID" value="AAZ59063.1"/>
    <property type="molecule type" value="Genomic_DNA"/>
</dbReference>
<dbReference type="RefSeq" id="WP_011294208.1">
    <property type="nucleotide sequence ID" value="NC_007335.2"/>
</dbReference>
<dbReference type="SMR" id="Q46HG5"/>
<dbReference type="STRING" id="59920.PMN2A_1575"/>
<dbReference type="KEGG" id="pmn:PMN2A_1575"/>
<dbReference type="HOGENOM" id="CLU_031223_2_1_3"/>
<dbReference type="OrthoDB" id="9804716at2"/>
<dbReference type="PhylomeDB" id="Q46HG5"/>
<dbReference type="UniPathway" id="UPA00109">
    <property type="reaction ID" value="UER00187"/>
</dbReference>
<dbReference type="Proteomes" id="UP000002535">
    <property type="component" value="Chromosome"/>
</dbReference>
<dbReference type="GO" id="GO:0009986">
    <property type="term" value="C:cell surface"/>
    <property type="evidence" value="ECO:0007669"/>
    <property type="project" value="UniProtKB-SubCell"/>
</dbReference>
<dbReference type="GO" id="GO:0005576">
    <property type="term" value="C:extracellular region"/>
    <property type="evidence" value="ECO:0007669"/>
    <property type="project" value="UniProtKB-SubCell"/>
</dbReference>
<dbReference type="GO" id="GO:0000015">
    <property type="term" value="C:phosphopyruvate hydratase complex"/>
    <property type="evidence" value="ECO:0007669"/>
    <property type="project" value="InterPro"/>
</dbReference>
<dbReference type="GO" id="GO:0000287">
    <property type="term" value="F:magnesium ion binding"/>
    <property type="evidence" value="ECO:0007669"/>
    <property type="project" value="UniProtKB-UniRule"/>
</dbReference>
<dbReference type="GO" id="GO:0004634">
    <property type="term" value="F:phosphopyruvate hydratase activity"/>
    <property type="evidence" value="ECO:0007669"/>
    <property type="project" value="UniProtKB-UniRule"/>
</dbReference>
<dbReference type="GO" id="GO:0006096">
    <property type="term" value="P:glycolytic process"/>
    <property type="evidence" value="ECO:0007669"/>
    <property type="project" value="UniProtKB-UniRule"/>
</dbReference>
<dbReference type="CDD" id="cd03313">
    <property type="entry name" value="enolase"/>
    <property type="match status" value="1"/>
</dbReference>
<dbReference type="FunFam" id="3.20.20.120:FF:000001">
    <property type="entry name" value="Enolase"/>
    <property type="match status" value="1"/>
</dbReference>
<dbReference type="FunFam" id="3.30.390.10:FF:000001">
    <property type="entry name" value="Enolase"/>
    <property type="match status" value="1"/>
</dbReference>
<dbReference type="Gene3D" id="3.20.20.120">
    <property type="entry name" value="Enolase-like C-terminal domain"/>
    <property type="match status" value="1"/>
</dbReference>
<dbReference type="Gene3D" id="3.30.390.10">
    <property type="entry name" value="Enolase-like, N-terminal domain"/>
    <property type="match status" value="1"/>
</dbReference>
<dbReference type="HAMAP" id="MF_00318">
    <property type="entry name" value="Enolase"/>
    <property type="match status" value="1"/>
</dbReference>
<dbReference type="InterPro" id="IPR000941">
    <property type="entry name" value="Enolase"/>
</dbReference>
<dbReference type="InterPro" id="IPR036849">
    <property type="entry name" value="Enolase-like_C_sf"/>
</dbReference>
<dbReference type="InterPro" id="IPR029017">
    <property type="entry name" value="Enolase-like_N"/>
</dbReference>
<dbReference type="InterPro" id="IPR020810">
    <property type="entry name" value="Enolase_C"/>
</dbReference>
<dbReference type="InterPro" id="IPR020809">
    <property type="entry name" value="Enolase_CS"/>
</dbReference>
<dbReference type="InterPro" id="IPR020811">
    <property type="entry name" value="Enolase_N"/>
</dbReference>
<dbReference type="NCBIfam" id="TIGR01060">
    <property type="entry name" value="eno"/>
    <property type="match status" value="1"/>
</dbReference>
<dbReference type="PANTHER" id="PTHR11902">
    <property type="entry name" value="ENOLASE"/>
    <property type="match status" value="1"/>
</dbReference>
<dbReference type="PANTHER" id="PTHR11902:SF1">
    <property type="entry name" value="ENOLASE"/>
    <property type="match status" value="1"/>
</dbReference>
<dbReference type="Pfam" id="PF00113">
    <property type="entry name" value="Enolase_C"/>
    <property type="match status" value="1"/>
</dbReference>
<dbReference type="Pfam" id="PF03952">
    <property type="entry name" value="Enolase_N"/>
    <property type="match status" value="1"/>
</dbReference>
<dbReference type="PIRSF" id="PIRSF001400">
    <property type="entry name" value="Enolase"/>
    <property type="match status" value="1"/>
</dbReference>
<dbReference type="PRINTS" id="PR00148">
    <property type="entry name" value="ENOLASE"/>
</dbReference>
<dbReference type="SFLD" id="SFLDS00001">
    <property type="entry name" value="Enolase"/>
    <property type="match status" value="1"/>
</dbReference>
<dbReference type="SFLD" id="SFLDF00002">
    <property type="entry name" value="enolase"/>
    <property type="match status" value="1"/>
</dbReference>
<dbReference type="SMART" id="SM01192">
    <property type="entry name" value="Enolase_C"/>
    <property type="match status" value="1"/>
</dbReference>
<dbReference type="SMART" id="SM01193">
    <property type="entry name" value="Enolase_N"/>
    <property type="match status" value="1"/>
</dbReference>
<dbReference type="SUPFAM" id="SSF51604">
    <property type="entry name" value="Enolase C-terminal domain-like"/>
    <property type="match status" value="1"/>
</dbReference>
<dbReference type="SUPFAM" id="SSF54826">
    <property type="entry name" value="Enolase N-terminal domain-like"/>
    <property type="match status" value="1"/>
</dbReference>
<dbReference type="PROSITE" id="PS00164">
    <property type="entry name" value="ENOLASE"/>
    <property type="match status" value="1"/>
</dbReference>
<accession>Q46HG5</accession>
<feature type="chain" id="PRO_0000267073" description="Enolase">
    <location>
        <begin position="1"/>
        <end position="433"/>
    </location>
</feature>
<feature type="active site" description="Proton donor" evidence="1">
    <location>
        <position position="209"/>
    </location>
</feature>
<feature type="active site" description="Proton acceptor" evidence="1">
    <location>
        <position position="339"/>
    </location>
</feature>
<feature type="binding site" evidence="1">
    <location>
        <position position="167"/>
    </location>
    <ligand>
        <name>(2R)-2-phosphoglycerate</name>
        <dbReference type="ChEBI" id="CHEBI:58289"/>
    </ligand>
</feature>
<feature type="binding site" evidence="1">
    <location>
        <position position="246"/>
    </location>
    <ligand>
        <name>Mg(2+)</name>
        <dbReference type="ChEBI" id="CHEBI:18420"/>
    </ligand>
</feature>
<feature type="binding site" evidence="1">
    <location>
        <position position="287"/>
    </location>
    <ligand>
        <name>Mg(2+)</name>
        <dbReference type="ChEBI" id="CHEBI:18420"/>
    </ligand>
</feature>
<feature type="binding site" evidence="1">
    <location>
        <position position="314"/>
    </location>
    <ligand>
        <name>Mg(2+)</name>
        <dbReference type="ChEBI" id="CHEBI:18420"/>
    </ligand>
</feature>
<feature type="binding site" evidence="1">
    <location>
        <position position="339"/>
    </location>
    <ligand>
        <name>(2R)-2-phosphoglycerate</name>
        <dbReference type="ChEBI" id="CHEBI:58289"/>
    </ligand>
</feature>
<feature type="binding site" evidence="1">
    <location>
        <position position="368"/>
    </location>
    <ligand>
        <name>(2R)-2-phosphoglycerate</name>
        <dbReference type="ChEBI" id="CHEBI:58289"/>
    </ligand>
</feature>
<feature type="binding site" evidence="1">
    <location>
        <position position="369"/>
    </location>
    <ligand>
        <name>(2R)-2-phosphoglycerate</name>
        <dbReference type="ChEBI" id="CHEBI:58289"/>
    </ligand>
</feature>
<feature type="binding site" evidence="1">
    <location>
        <position position="390"/>
    </location>
    <ligand>
        <name>(2R)-2-phosphoglycerate</name>
        <dbReference type="ChEBI" id="CHEBI:58289"/>
    </ligand>
</feature>
<sequence length="433" mass="45954">MADSLELVIDTIMAREVLDSRGNPTVEAEVLLEGGAIGRSIVPSGASTGAHEAHELRDGGKRYLGKGVLQAVNHIEENIAPALCGLSSLDQATVDSVMKQLDDTDNKSNLGANSILAVSMATARAAANGLGLPLYRYLGGPMSSLLPVPLMNVINGGEHAANNLDFQEFMLVPHGAESFREALRMGAEVFHTLKDLLSQKGLSTAVGDEGGFAPNLESNKAAGDLLMQAIEQAGFKPGEQVSLALDVASTEFYAEGQYCYGGNSYSSEQMVEELAGLVNAFPIVSIEDGLAEDDWDGWRLLTKKLGKNVQLVGDDLFVTNTLRLQRGIDENIANSILIKVNQIGSLTETLEAIELASRSSYTTVISHRSGETEDTTIADLSVATKSGQIKTGSLSRSERVAKYNQLLRIEDELGSQATYAGLVGLGPRGSLKG</sequence>
<gene>
    <name evidence="1" type="primary">eno</name>
    <name type="ordered locus">PMN2A_1575</name>
</gene>
<comment type="function">
    <text evidence="1">Catalyzes the reversible conversion of 2-phosphoglycerate (2-PG) into phosphoenolpyruvate (PEP). It is essential for the degradation of carbohydrates via glycolysis.</text>
</comment>
<comment type="catalytic activity">
    <reaction evidence="1">
        <text>(2R)-2-phosphoglycerate = phosphoenolpyruvate + H2O</text>
        <dbReference type="Rhea" id="RHEA:10164"/>
        <dbReference type="ChEBI" id="CHEBI:15377"/>
        <dbReference type="ChEBI" id="CHEBI:58289"/>
        <dbReference type="ChEBI" id="CHEBI:58702"/>
        <dbReference type="EC" id="4.2.1.11"/>
    </reaction>
</comment>
<comment type="cofactor">
    <cofactor evidence="1">
        <name>Mg(2+)</name>
        <dbReference type="ChEBI" id="CHEBI:18420"/>
    </cofactor>
    <text evidence="1">Binds a second Mg(2+) ion via substrate during catalysis.</text>
</comment>
<comment type="pathway">
    <text evidence="1">Carbohydrate degradation; glycolysis; pyruvate from D-glyceraldehyde 3-phosphate: step 4/5.</text>
</comment>
<comment type="subcellular location">
    <subcellularLocation>
        <location evidence="1">Cytoplasm</location>
    </subcellularLocation>
    <subcellularLocation>
        <location evidence="1">Secreted</location>
    </subcellularLocation>
    <subcellularLocation>
        <location evidence="1">Cell surface</location>
    </subcellularLocation>
    <text evidence="1">Fractions of enolase are present in both the cytoplasm and on the cell surface.</text>
</comment>
<comment type="similarity">
    <text evidence="1">Belongs to the enolase family.</text>
</comment>
<proteinExistence type="inferred from homology"/>
<organism>
    <name type="scientific">Prochlorococcus marinus (strain NATL2A)</name>
    <dbReference type="NCBI Taxonomy" id="59920"/>
    <lineage>
        <taxon>Bacteria</taxon>
        <taxon>Bacillati</taxon>
        <taxon>Cyanobacteriota</taxon>
        <taxon>Cyanophyceae</taxon>
        <taxon>Synechococcales</taxon>
        <taxon>Prochlorococcaceae</taxon>
        <taxon>Prochlorococcus</taxon>
    </lineage>
</organism>
<protein>
    <recommendedName>
        <fullName evidence="1">Enolase</fullName>
        <ecNumber evidence="1">4.2.1.11</ecNumber>
    </recommendedName>
    <alternativeName>
        <fullName evidence="1">2-phospho-D-glycerate hydro-lyase</fullName>
    </alternativeName>
    <alternativeName>
        <fullName evidence="1">2-phosphoglycerate dehydratase</fullName>
    </alternativeName>
</protein>
<name>ENO_PROMT</name>